<sequence length="196" mass="21759">MNNDLIAKAAIDRRMAEIITPVIEDMGFELVRVRLMSGKSTILQIMADRPDGGIEVDDCAEISQAVSAVLDVEDPILDEYTLEVSSPGIDRPLTRLKDFEMFEGYEAKIETGDMVDGRRRFKGALAGVEDDEVLINIEEGTIGLKFDWLSDAKLVLTDDLIKEMLRQRKAAGALDETNFDEVSTELETDTPSEGDQ</sequence>
<feature type="chain" id="PRO_1000064762" description="Ribosome maturation factor RimP">
    <location>
        <begin position="1"/>
        <end position="196"/>
    </location>
</feature>
<feature type="region of interest" description="Disordered" evidence="2">
    <location>
        <begin position="176"/>
        <end position="196"/>
    </location>
</feature>
<feature type="compositionally biased region" description="Acidic residues" evidence="2">
    <location>
        <begin position="177"/>
        <end position="196"/>
    </location>
</feature>
<dbReference type="EMBL" id="CP000362">
    <property type="protein sequence ID" value="ABG30108.1"/>
    <property type="molecule type" value="Genomic_DNA"/>
</dbReference>
<dbReference type="RefSeq" id="WP_011566730.1">
    <property type="nucleotide sequence ID" value="NC_008209.1"/>
</dbReference>
<dbReference type="SMR" id="Q16D35"/>
<dbReference type="STRING" id="375451.RD1_0389"/>
<dbReference type="KEGG" id="rde:RD1_0389"/>
<dbReference type="eggNOG" id="COG0779">
    <property type="taxonomic scope" value="Bacteria"/>
</dbReference>
<dbReference type="HOGENOM" id="CLU_070525_0_1_5"/>
<dbReference type="OrthoDB" id="9805006at2"/>
<dbReference type="Proteomes" id="UP000007029">
    <property type="component" value="Chromosome"/>
</dbReference>
<dbReference type="GO" id="GO:0005829">
    <property type="term" value="C:cytosol"/>
    <property type="evidence" value="ECO:0007669"/>
    <property type="project" value="TreeGrafter"/>
</dbReference>
<dbReference type="GO" id="GO:0000028">
    <property type="term" value="P:ribosomal small subunit assembly"/>
    <property type="evidence" value="ECO:0007669"/>
    <property type="project" value="TreeGrafter"/>
</dbReference>
<dbReference type="GO" id="GO:0006412">
    <property type="term" value="P:translation"/>
    <property type="evidence" value="ECO:0007669"/>
    <property type="project" value="TreeGrafter"/>
</dbReference>
<dbReference type="CDD" id="cd01734">
    <property type="entry name" value="YlxS_C"/>
    <property type="match status" value="1"/>
</dbReference>
<dbReference type="FunFam" id="3.30.300.70:FF:000001">
    <property type="entry name" value="Ribosome maturation factor RimP"/>
    <property type="match status" value="1"/>
</dbReference>
<dbReference type="Gene3D" id="2.30.30.180">
    <property type="entry name" value="Ribosome maturation factor RimP, C-terminal domain"/>
    <property type="match status" value="1"/>
</dbReference>
<dbReference type="Gene3D" id="3.30.300.70">
    <property type="entry name" value="RimP-like superfamily, N-terminal"/>
    <property type="match status" value="1"/>
</dbReference>
<dbReference type="HAMAP" id="MF_01077">
    <property type="entry name" value="RimP"/>
    <property type="match status" value="1"/>
</dbReference>
<dbReference type="InterPro" id="IPR003728">
    <property type="entry name" value="Ribosome_maturation_RimP"/>
</dbReference>
<dbReference type="InterPro" id="IPR028998">
    <property type="entry name" value="RimP_C"/>
</dbReference>
<dbReference type="InterPro" id="IPR036847">
    <property type="entry name" value="RimP_C_sf"/>
</dbReference>
<dbReference type="InterPro" id="IPR028989">
    <property type="entry name" value="RimP_N"/>
</dbReference>
<dbReference type="InterPro" id="IPR035956">
    <property type="entry name" value="RimP_N_sf"/>
</dbReference>
<dbReference type="NCBIfam" id="NF000932">
    <property type="entry name" value="PRK00092.2-5"/>
    <property type="match status" value="1"/>
</dbReference>
<dbReference type="PANTHER" id="PTHR33867">
    <property type="entry name" value="RIBOSOME MATURATION FACTOR RIMP"/>
    <property type="match status" value="1"/>
</dbReference>
<dbReference type="PANTHER" id="PTHR33867:SF1">
    <property type="entry name" value="RIBOSOME MATURATION FACTOR RIMP"/>
    <property type="match status" value="1"/>
</dbReference>
<dbReference type="Pfam" id="PF17384">
    <property type="entry name" value="DUF150_C"/>
    <property type="match status" value="1"/>
</dbReference>
<dbReference type="Pfam" id="PF02576">
    <property type="entry name" value="RimP_N"/>
    <property type="match status" value="1"/>
</dbReference>
<dbReference type="SUPFAM" id="SSF74942">
    <property type="entry name" value="YhbC-like, C-terminal domain"/>
    <property type="match status" value="1"/>
</dbReference>
<dbReference type="SUPFAM" id="SSF75420">
    <property type="entry name" value="YhbC-like, N-terminal domain"/>
    <property type="match status" value="1"/>
</dbReference>
<proteinExistence type="inferred from homology"/>
<organism>
    <name type="scientific">Roseobacter denitrificans (strain ATCC 33942 / OCh 114)</name>
    <name type="common">Erythrobacter sp. (strain OCh 114)</name>
    <name type="synonym">Roseobacter denitrificans</name>
    <dbReference type="NCBI Taxonomy" id="375451"/>
    <lineage>
        <taxon>Bacteria</taxon>
        <taxon>Pseudomonadati</taxon>
        <taxon>Pseudomonadota</taxon>
        <taxon>Alphaproteobacteria</taxon>
        <taxon>Rhodobacterales</taxon>
        <taxon>Roseobacteraceae</taxon>
        <taxon>Roseobacter</taxon>
    </lineage>
</organism>
<evidence type="ECO:0000255" key="1">
    <source>
        <dbReference type="HAMAP-Rule" id="MF_01077"/>
    </source>
</evidence>
<evidence type="ECO:0000256" key="2">
    <source>
        <dbReference type="SAM" id="MobiDB-lite"/>
    </source>
</evidence>
<accession>Q16D35</accession>
<gene>
    <name evidence="1" type="primary">rimP</name>
    <name type="ordered locus">RD1_0389</name>
</gene>
<protein>
    <recommendedName>
        <fullName evidence="1">Ribosome maturation factor RimP</fullName>
    </recommendedName>
</protein>
<name>RIMP_ROSDO</name>
<comment type="function">
    <text evidence="1">Required for maturation of 30S ribosomal subunits.</text>
</comment>
<comment type="subcellular location">
    <subcellularLocation>
        <location evidence="1">Cytoplasm</location>
    </subcellularLocation>
</comment>
<comment type="similarity">
    <text evidence="1">Belongs to the RimP family.</text>
</comment>
<keyword id="KW-0963">Cytoplasm</keyword>
<keyword id="KW-1185">Reference proteome</keyword>
<keyword id="KW-0690">Ribosome biogenesis</keyword>
<reference key="1">
    <citation type="journal article" date="2007" name="J. Bacteriol.">
        <title>The complete genome sequence of Roseobacter denitrificans reveals a mixotrophic rather than photosynthetic metabolism.</title>
        <authorList>
            <person name="Swingley W.D."/>
            <person name="Sadekar S."/>
            <person name="Mastrian S.D."/>
            <person name="Matthies H.J."/>
            <person name="Hao J."/>
            <person name="Ramos H."/>
            <person name="Acharya C.R."/>
            <person name="Conrad A.L."/>
            <person name="Taylor H.L."/>
            <person name="Dejesa L.C."/>
            <person name="Shah M.K."/>
            <person name="O'Huallachain M.E."/>
            <person name="Lince M.T."/>
            <person name="Blankenship R.E."/>
            <person name="Beatty J.T."/>
            <person name="Touchman J.W."/>
        </authorList>
    </citation>
    <scope>NUCLEOTIDE SEQUENCE [LARGE SCALE GENOMIC DNA]</scope>
    <source>
        <strain>ATCC 33942 / OCh 114</strain>
    </source>
</reference>